<organism>
    <name type="scientific">Variola virus (isolate Human/India/Ind3/1967)</name>
    <name type="common">VARV</name>
    <name type="synonym">Smallpox virus</name>
    <dbReference type="NCBI Taxonomy" id="587200"/>
    <lineage>
        <taxon>Viruses</taxon>
        <taxon>Varidnaviria</taxon>
        <taxon>Bamfordvirae</taxon>
        <taxon>Nucleocytoviricota</taxon>
        <taxon>Pokkesviricetes</taxon>
        <taxon>Chitovirales</taxon>
        <taxon>Poxviridae</taxon>
        <taxon>Chordopoxvirinae</taxon>
        <taxon>Orthopoxvirus</taxon>
        <taxon>Variola virus</taxon>
    </lineage>
</organism>
<proteinExistence type="evidence at transcript level"/>
<gene>
    <name type="ORF">G7L</name>
</gene>
<sequence>MAAEQRRSTIFDIVSKCIVQSVLRDISINSEYIESKAKQLCYCPASKKESVINGIYNCCESNIEIMDKEQLLKILDNLRCHSAHVCNATDFWRLYNSLKRFTHTTAFFNTCKPTILATLNTLITLILSNKLLYAAEMVEYLENQLDSSNKSMSQELAELLEMKYALINLVQYRILPMIIGEPIIVAGFSGKEPISNYSAEVERLMELPVKTDIVNTTYDFLARKGIDTSNNIAEYIAGLKIEEIEKVEKYLPEVISTIANSNIIKNKKSIFPANINDKQIMECSKMLDTSEKYSKGYKTDGAVTSPLTGNNTITTFIPISASDMQKFTILEYLYIMRVMANNVKKKNEGKNNGGVVMHINSPFKVINLPKC</sequence>
<dbReference type="EMBL" id="X67119">
    <property type="protein sequence ID" value="CAA47569.1"/>
    <property type="molecule type" value="Genomic_DNA"/>
</dbReference>
<dbReference type="EMBL" id="X69198">
    <property type="protein sequence ID" value="CAA49011.1"/>
    <property type="molecule type" value="Genomic_DNA"/>
</dbReference>
<dbReference type="PIR" id="S33084">
    <property type="entry name" value="S33084"/>
</dbReference>
<dbReference type="SMR" id="P0DSU1"/>
<dbReference type="KEGG" id="vg:1486436"/>
<dbReference type="Proteomes" id="UP000002060">
    <property type="component" value="Segment"/>
</dbReference>
<dbReference type="GO" id="GO:0030430">
    <property type="term" value="C:host cell cytoplasm"/>
    <property type="evidence" value="ECO:0007669"/>
    <property type="project" value="UniProtKB-SubCell"/>
</dbReference>
<dbReference type="GO" id="GO:0044423">
    <property type="term" value="C:virion component"/>
    <property type="evidence" value="ECO:0007669"/>
    <property type="project" value="UniProtKB-KW"/>
</dbReference>
<dbReference type="InterPro" id="IPR008787">
    <property type="entry name" value="Poxvirus_G7"/>
</dbReference>
<dbReference type="Pfam" id="PF05503">
    <property type="entry name" value="Pox_G7"/>
    <property type="match status" value="1"/>
</dbReference>
<name>G7_VAR67</name>
<organismHost>
    <name type="scientific">Homo sapiens</name>
    <name type="common">Human</name>
    <dbReference type="NCBI Taxonomy" id="9606"/>
</organismHost>
<evidence type="ECO:0000250" key="1"/>
<evidence type="ECO:0000305" key="2"/>
<protein>
    <recommendedName>
        <fullName>Assembly protein G7</fullName>
    </recommendedName>
</protein>
<keyword id="KW-1035">Host cytoplasm</keyword>
<keyword id="KW-0597">Phosphoprotein</keyword>
<keyword id="KW-1185">Reference proteome</keyword>
<keyword id="KW-0946">Virion</keyword>
<reference key="1">
    <citation type="journal article" date="1993" name="Virus Res.">
        <title>Analysis of the nucleotide sequence of a 43 kbp segment of the genome of variola virus India-1967 strain.</title>
        <authorList>
            <person name="Shchelkunov S.N."/>
            <person name="Blinov V.M."/>
            <person name="Resenchuk S.M."/>
            <person name="Totmenin A.V."/>
            <person name="Sandakhchiev L.S."/>
        </authorList>
    </citation>
    <scope>NUCLEOTIDE SEQUENCE [GENOMIC DNA]</scope>
</reference>
<reference key="2">
    <citation type="journal article" date="1993" name="Virus Res.">
        <title>Nucleotide sequence analysis of variola virus HindIII M, L, I genome fragments.</title>
        <authorList>
            <person name="Shchelkunov S.N."/>
            <person name="Blinov V.M."/>
            <person name="Totmenin A.V."/>
            <person name="Marennikova S.S."/>
            <person name="Kolykhalov A.A."/>
            <person name="Frolov I.V."/>
            <person name="Chizhikov V.E."/>
            <person name="Gytorov V.V."/>
            <person name="Gashikov P.V."/>
            <person name="Belanov E.F."/>
            <person name="Belavin P.A."/>
            <person name="Resenchuk S.M."/>
            <person name="Andzhaparidze O.G."/>
            <person name="Sandakhchiev L.S."/>
        </authorList>
    </citation>
    <scope>NUCLEOTIDE SEQUENCE [GENOMIC DNA]</scope>
</reference>
<reference key="3">
    <citation type="journal article" date="1993" name="FEBS Lett.">
        <title>Genes of variola and vaccinia viruses necessary to overcome the host protective mechanisms.</title>
        <authorList>
            <person name="Shchelkunov S.N."/>
            <person name="Blinov V.M."/>
            <person name="Sandakhchiev L.S."/>
        </authorList>
    </citation>
    <scope>NUCLEOTIDE SEQUENCE [LARGE SCALE GENOMIC DNA]</scope>
</reference>
<accession>P0DSU1</accession>
<accession>P32997</accession>
<feature type="chain" id="PRO_0000099539" description="Assembly protein G7">
    <location>
        <begin position="1"/>
        <end position="371"/>
    </location>
</feature>
<feature type="site" description="Cleavage; by I7 protease" evidence="1">
    <location>
        <begin position="187"/>
        <end position="188"/>
    </location>
</feature>
<feature type="site" description="Cleavage; by I7 protease" evidence="1">
    <location>
        <begin position="238"/>
        <end position="239"/>
    </location>
</feature>
<comment type="function">
    <text evidence="1">Late protein which is a part of a large complex required for early virion morphogenesis. This complex participates in the formation of virosomes and the incorporation of virosomal contents into nascent immature virions (By similarity).</text>
</comment>
<comment type="subunit">
    <text evidence="1">Part of a complex composed of A30, G7, F10 kinase, A15, D2, D3, and J1.</text>
</comment>
<comment type="subcellular location">
    <subcellularLocation>
        <location evidence="1">Host cytoplasm</location>
    </subcellularLocation>
    <subcellularLocation>
        <location evidence="1">Virion</location>
    </subcellularLocation>
    <text evidence="1">Localizes in cytoplasmic virus factories and present in the virion core.</text>
</comment>
<comment type="induction">
    <text>Expressed in the late phase of the viral replicative cycle.</text>
</comment>
<comment type="PTM">
    <text evidence="1">Phosphorylated on serines by F10 kinase, phosphorylation state is regulated by H1 phosphatase.</text>
</comment>
<comment type="PTM">
    <text evidence="1">Undergoes proteolytic processing during morphogenesis, probably required for the transformation of immature virions (IV) into mature virions (MV).</text>
</comment>
<comment type="similarity">
    <text evidence="2">Belongs to the chordopoxvirinae G7 family.</text>
</comment>